<dbReference type="EC" id="1.4.3.5" evidence="1"/>
<dbReference type="EMBL" id="CP001488">
    <property type="protein sequence ID" value="ACO00231.1"/>
    <property type="molecule type" value="Genomic_DNA"/>
</dbReference>
<dbReference type="RefSeq" id="WP_002971565.1">
    <property type="nucleotide sequence ID" value="NC_012441.1"/>
</dbReference>
<dbReference type="SMR" id="C0RHC3"/>
<dbReference type="GeneID" id="97534209"/>
<dbReference type="KEGG" id="bmi:BMEA_A0447"/>
<dbReference type="HOGENOM" id="CLU_032263_2_3_5"/>
<dbReference type="UniPathway" id="UPA01068">
    <property type="reaction ID" value="UER00304"/>
</dbReference>
<dbReference type="UniPathway" id="UPA01068">
    <property type="reaction ID" value="UER00305"/>
</dbReference>
<dbReference type="Proteomes" id="UP000001748">
    <property type="component" value="Chromosome I"/>
</dbReference>
<dbReference type="GO" id="GO:0010181">
    <property type="term" value="F:FMN binding"/>
    <property type="evidence" value="ECO:0007669"/>
    <property type="project" value="UniProtKB-UniRule"/>
</dbReference>
<dbReference type="GO" id="GO:0004733">
    <property type="term" value="F:pyridoxamine phosphate oxidase activity"/>
    <property type="evidence" value="ECO:0007669"/>
    <property type="project" value="UniProtKB-UniRule"/>
</dbReference>
<dbReference type="GO" id="GO:0008615">
    <property type="term" value="P:pyridoxine biosynthetic process"/>
    <property type="evidence" value="ECO:0007669"/>
    <property type="project" value="UniProtKB-KW"/>
</dbReference>
<dbReference type="Gene3D" id="2.30.110.10">
    <property type="entry name" value="Electron Transport, Fmn-binding Protein, Chain A"/>
    <property type="match status" value="1"/>
</dbReference>
<dbReference type="HAMAP" id="MF_01629">
    <property type="entry name" value="PdxH"/>
    <property type="match status" value="1"/>
</dbReference>
<dbReference type="InterPro" id="IPR000659">
    <property type="entry name" value="Pyridox_Oxase"/>
</dbReference>
<dbReference type="InterPro" id="IPR019740">
    <property type="entry name" value="Pyridox_Oxase_CS"/>
</dbReference>
<dbReference type="InterPro" id="IPR011576">
    <property type="entry name" value="Pyridox_Oxase_N"/>
</dbReference>
<dbReference type="InterPro" id="IPR019576">
    <property type="entry name" value="Pyridoxamine_oxidase_dimer_C"/>
</dbReference>
<dbReference type="InterPro" id="IPR012349">
    <property type="entry name" value="Split_barrel_FMN-bd"/>
</dbReference>
<dbReference type="NCBIfam" id="TIGR00558">
    <property type="entry name" value="pdxH"/>
    <property type="match status" value="1"/>
</dbReference>
<dbReference type="NCBIfam" id="NF004231">
    <property type="entry name" value="PRK05679.1"/>
    <property type="match status" value="1"/>
</dbReference>
<dbReference type="PANTHER" id="PTHR10851:SF0">
    <property type="entry name" value="PYRIDOXINE-5'-PHOSPHATE OXIDASE"/>
    <property type="match status" value="1"/>
</dbReference>
<dbReference type="PANTHER" id="PTHR10851">
    <property type="entry name" value="PYRIDOXINE-5-PHOSPHATE OXIDASE"/>
    <property type="match status" value="1"/>
</dbReference>
<dbReference type="Pfam" id="PF10590">
    <property type="entry name" value="PNP_phzG_C"/>
    <property type="match status" value="1"/>
</dbReference>
<dbReference type="Pfam" id="PF01243">
    <property type="entry name" value="PNPOx_N"/>
    <property type="match status" value="1"/>
</dbReference>
<dbReference type="PIRSF" id="PIRSF000190">
    <property type="entry name" value="Pyd_amn-ph_oxd"/>
    <property type="match status" value="1"/>
</dbReference>
<dbReference type="SUPFAM" id="SSF50475">
    <property type="entry name" value="FMN-binding split barrel"/>
    <property type="match status" value="1"/>
</dbReference>
<dbReference type="PROSITE" id="PS01064">
    <property type="entry name" value="PYRIDOX_OXIDASE"/>
    <property type="match status" value="1"/>
</dbReference>
<reference key="1">
    <citation type="submission" date="2009-03" db="EMBL/GenBank/DDBJ databases">
        <title>Brucella melitensis ATCC 23457 whole genome shotgun sequencing project.</title>
        <authorList>
            <person name="Setubal J.C."/>
            <person name="Boyle S."/>
            <person name="Crasta O.R."/>
            <person name="Gillespie J.J."/>
            <person name="Kenyon R.W."/>
            <person name="Lu J."/>
            <person name="Mane S."/>
            <person name="Nagrani S."/>
            <person name="Shallom J.M."/>
            <person name="Shallom S."/>
            <person name="Shukla M."/>
            <person name="Snyder E.E."/>
            <person name="Sobral B.W."/>
            <person name="Wattam A.R."/>
            <person name="Will R."/>
            <person name="Williams K."/>
            <person name="Yoo H."/>
            <person name="Munk C."/>
            <person name="Tapia R."/>
            <person name="Han C."/>
            <person name="Detter J.C."/>
            <person name="Bruce D."/>
            <person name="Brettin T.S."/>
        </authorList>
    </citation>
    <scope>NUCLEOTIDE SEQUENCE [LARGE SCALE GENOMIC DNA]</scope>
    <source>
        <strain>ATCC 23457</strain>
    </source>
</reference>
<proteinExistence type="inferred from homology"/>
<accession>C0RHC3</accession>
<evidence type="ECO:0000255" key="1">
    <source>
        <dbReference type="HAMAP-Rule" id="MF_01629"/>
    </source>
</evidence>
<keyword id="KW-0285">Flavoprotein</keyword>
<keyword id="KW-0288">FMN</keyword>
<keyword id="KW-0560">Oxidoreductase</keyword>
<keyword id="KW-0664">Pyridoxine biosynthesis</keyword>
<sequence length="203" mass="23281">MTNSSDDFTQSAEPFKLFAEWLADAAKSEPNDPNAVALATVDPDGLPNVRMVLLKDFDETGFVFYTNYESKKGQEILSAEKAAMCFHWKSLRRQVRVRGPVEKVSDAEADAYYASRPRGSRIGAWASKQSRPLESRFALEKAVAEYTAKYAIGDIPRPPYWSGFRIRPVSIEFWHDRPFRLHDRVLFTRPTPEGDWNKDRLYP</sequence>
<comment type="function">
    <text evidence="1">Catalyzes the oxidation of either pyridoxine 5'-phosphate (PNP) or pyridoxamine 5'-phosphate (PMP) into pyridoxal 5'-phosphate (PLP).</text>
</comment>
<comment type="catalytic activity">
    <reaction evidence="1">
        <text>pyridoxamine 5'-phosphate + O2 + H2O = pyridoxal 5'-phosphate + H2O2 + NH4(+)</text>
        <dbReference type="Rhea" id="RHEA:15817"/>
        <dbReference type="ChEBI" id="CHEBI:15377"/>
        <dbReference type="ChEBI" id="CHEBI:15379"/>
        <dbReference type="ChEBI" id="CHEBI:16240"/>
        <dbReference type="ChEBI" id="CHEBI:28938"/>
        <dbReference type="ChEBI" id="CHEBI:58451"/>
        <dbReference type="ChEBI" id="CHEBI:597326"/>
        <dbReference type="EC" id="1.4.3.5"/>
    </reaction>
</comment>
<comment type="catalytic activity">
    <reaction evidence="1">
        <text>pyridoxine 5'-phosphate + O2 = pyridoxal 5'-phosphate + H2O2</text>
        <dbReference type="Rhea" id="RHEA:15149"/>
        <dbReference type="ChEBI" id="CHEBI:15379"/>
        <dbReference type="ChEBI" id="CHEBI:16240"/>
        <dbReference type="ChEBI" id="CHEBI:58589"/>
        <dbReference type="ChEBI" id="CHEBI:597326"/>
        <dbReference type="EC" id="1.4.3.5"/>
    </reaction>
</comment>
<comment type="cofactor">
    <cofactor evidence="1">
        <name>FMN</name>
        <dbReference type="ChEBI" id="CHEBI:58210"/>
    </cofactor>
    <text evidence="1">Binds 1 FMN per subunit.</text>
</comment>
<comment type="pathway">
    <text evidence="1">Cofactor metabolism; pyridoxal 5'-phosphate salvage; pyridoxal 5'-phosphate from pyridoxamine 5'-phosphate: step 1/1.</text>
</comment>
<comment type="pathway">
    <text evidence="1">Cofactor metabolism; pyridoxal 5'-phosphate salvage; pyridoxal 5'-phosphate from pyridoxine 5'-phosphate: step 1/1.</text>
</comment>
<comment type="subunit">
    <text evidence="1">Homodimer.</text>
</comment>
<comment type="similarity">
    <text evidence="1">Belongs to the pyridoxamine 5'-phosphate oxidase family.</text>
</comment>
<name>PDXH_BRUMB</name>
<protein>
    <recommendedName>
        <fullName evidence="1">Pyridoxine/pyridoxamine 5'-phosphate oxidase</fullName>
        <ecNumber evidence="1">1.4.3.5</ecNumber>
    </recommendedName>
    <alternativeName>
        <fullName evidence="1">PNP/PMP oxidase</fullName>
        <shortName evidence="1">PNPOx</shortName>
    </alternativeName>
    <alternativeName>
        <fullName evidence="1">Pyridoxal 5'-phosphate synthase</fullName>
    </alternativeName>
</protein>
<gene>
    <name evidence="1" type="primary">pdxH</name>
    <name type="ordered locus">BMEA_A0447</name>
</gene>
<organism>
    <name type="scientific">Brucella melitensis biotype 2 (strain ATCC 23457)</name>
    <dbReference type="NCBI Taxonomy" id="546272"/>
    <lineage>
        <taxon>Bacteria</taxon>
        <taxon>Pseudomonadati</taxon>
        <taxon>Pseudomonadota</taxon>
        <taxon>Alphaproteobacteria</taxon>
        <taxon>Hyphomicrobiales</taxon>
        <taxon>Brucellaceae</taxon>
        <taxon>Brucella/Ochrobactrum group</taxon>
        <taxon>Brucella</taxon>
    </lineage>
</organism>
<feature type="chain" id="PRO_1000186291" description="Pyridoxine/pyridoxamine 5'-phosphate oxidase">
    <location>
        <begin position="1"/>
        <end position="203"/>
    </location>
</feature>
<feature type="binding site" evidence="1">
    <location>
        <begin position="50"/>
        <end position="55"/>
    </location>
    <ligand>
        <name>FMN</name>
        <dbReference type="ChEBI" id="CHEBI:58210"/>
    </ligand>
</feature>
<feature type="binding site" evidence="1">
    <location>
        <position position="55"/>
    </location>
    <ligand>
        <name>substrate</name>
    </ligand>
</feature>
<feature type="binding site" evidence="1">
    <location>
        <begin position="65"/>
        <end position="66"/>
    </location>
    <ligand>
        <name>FMN</name>
        <dbReference type="ChEBI" id="CHEBI:58210"/>
    </ligand>
</feature>
<feature type="binding site" evidence="1">
    <location>
        <position position="71"/>
    </location>
    <ligand>
        <name>FMN</name>
        <dbReference type="ChEBI" id="CHEBI:58210"/>
    </ligand>
</feature>
<feature type="binding site" evidence="1">
    <location>
        <position position="72"/>
    </location>
    <ligand>
        <name>FMN</name>
        <dbReference type="ChEBI" id="CHEBI:58210"/>
    </ligand>
</feature>
<feature type="binding site" evidence="1">
    <location>
        <position position="94"/>
    </location>
    <ligand>
        <name>FMN</name>
        <dbReference type="ChEBI" id="CHEBI:58210"/>
    </ligand>
</feature>
<feature type="binding site" evidence="1">
    <location>
        <position position="112"/>
    </location>
    <ligand>
        <name>substrate</name>
    </ligand>
</feature>
<feature type="binding site" evidence="1">
    <location>
        <position position="116"/>
    </location>
    <ligand>
        <name>substrate</name>
    </ligand>
</feature>
<feature type="binding site" evidence="1">
    <location>
        <position position="120"/>
    </location>
    <ligand>
        <name>substrate</name>
    </ligand>
</feature>
<feature type="binding site" evidence="1">
    <location>
        <begin position="129"/>
        <end position="130"/>
    </location>
    <ligand>
        <name>FMN</name>
        <dbReference type="ChEBI" id="CHEBI:58210"/>
    </ligand>
</feature>
<feature type="binding site" evidence="1">
    <location>
        <position position="174"/>
    </location>
    <ligand>
        <name>FMN</name>
        <dbReference type="ChEBI" id="CHEBI:58210"/>
    </ligand>
</feature>
<feature type="binding site" evidence="1">
    <location>
        <begin position="180"/>
        <end position="182"/>
    </location>
    <ligand>
        <name>substrate</name>
    </ligand>
</feature>
<feature type="binding site" evidence="1">
    <location>
        <position position="184"/>
    </location>
    <ligand>
        <name>FMN</name>
        <dbReference type="ChEBI" id="CHEBI:58210"/>
    </ligand>
</feature>